<evidence type="ECO:0000256" key="1">
    <source>
        <dbReference type="SAM" id="MobiDB-lite"/>
    </source>
</evidence>
<evidence type="ECO:0000269" key="2">
    <source>
    </source>
</evidence>
<evidence type="ECO:0000269" key="3">
    <source>
    </source>
</evidence>
<evidence type="ECO:0000269" key="4">
    <source>
    </source>
</evidence>
<evidence type="ECO:0000305" key="5"/>
<evidence type="ECO:0007744" key="6">
    <source>
    </source>
</evidence>
<evidence type="ECO:0007744" key="7">
    <source>
    </source>
</evidence>
<evidence type="ECO:0007744" key="8">
    <source>
    </source>
</evidence>
<proteinExistence type="evidence at protein level"/>
<sequence length="491" mass="56549">MILDPLSPNIENHTQDEIIEFWEKTESIANIPKENLDESHVNSSLVAYLKFATDSYKVFINTDRDLYRMSLILLESSLFEFKKEFCLSKLQSLLNIDLLEMNMKFIIVYILLCEAKKNVYSLEIMLKFQGFTVFYNTLYTQFAYLSKYGKERTVASKHQYNSNNSSTGTSLDSLDRSLTDIDLGIIDEMKQISTVLMDLLFQIMKYCKCVIANLQIVDDFFVYYMMESMRSDTMDDMFNNAEFKLLLALNEQYMMFAKEYDIENKVYKYLINGSVSRCFTELLLLKFNRASDPPLQIMMCKIIYLILTPRGDYSPMNFFYTNDLRVLIDVLIRELQNISEDEEVLRNTLLRVLIPLLKNTQLSKTHYRKDDLNKLLNYLSTLDNICVDSPALHEHQVTVALSRKCLQQIPWLETPSTPSDGGSSVSSNNTSRNSSIVALGTPDNQNILARKGHLYSNRELDVSAESLTKRKAKAPPPPPPPPPSRKCGTPK</sequence>
<gene>
    <name type="primary">LDB17</name>
    <name type="ordered locus">YDL146W</name>
    <name type="ORF">D1575</name>
</gene>
<feature type="chain" id="PRO_0000240385" description="Protein LDB17">
    <location>
        <begin position="1"/>
        <end position="491"/>
    </location>
</feature>
<feature type="region of interest" description="Disordered" evidence="1">
    <location>
        <begin position="413"/>
        <end position="491"/>
    </location>
</feature>
<feature type="compositionally biased region" description="Low complexity" evidence="1">
    <location>
        <begin position="414"/>
        <end position="435"/>
    </location>
</feature>
<feature type="compositionally biased region" description="Pro residues" evidence="1">
    <location>
        <begin position="474"/>
        <end position="484"/>
    </location>
</feature>
<feature type="modified residue" description="Phosphoserine" evidence="7">
    <location>
        <position position="7"/>
    </location>
</feature>
<feature type="modified residue" description="Phosphoserine" evidence="6 8">
    <location>
        <position position="463"/>
    </location>
</feature>
<feature type="modified residue" description="Phosphoserine" evidence="6 8">
    <location>
        <position position="466"/>
    </location>
</feature>
<name>LDB17_YEAST</name>
<protein>
    <recommendedName>
        <fullName>Protein LDB17</fullName>
    </recommendedName>
    <alternativeName>
        <fullName>Low dye-binding protein 17</fullName>
    </alternativeName>
</protein>
<organism>
    <name type="scientific">Saccharomyces cerevisiae (strain ATCC 204508 / S288c)</name>
    <name type="common">Baker's yeast</name>
    <dbReference type="NCBI Taxonomy" id="559292"/>
    <lineage>
        <taxon>Eukaryota</taxon>
        <taxon>Fungi</taxon>
        <taxon>Dikarya</taxon>
        <taxon>Ascomycota</taxon>
        <taxon>Saccharomycotina</taxon>
        <taxon>Saccharomycetes</taxon>
        <taxon>Saccharomycetales</taxon>
        <taxon>Saccharomycetaceae</taxon>
        <taxon>Saccharomyces</taxon>
    </lineage>
</organism>
<comment type="function">
    <text evidence="4">May be involved in protein-linked oligosaccharide phosphorylation since the deletion reduces the negative charge of the cell surface.</text>
</comment>
<comment type="interaction">
    <interactant intactId="EBI-38872">
        <id>Q12342</id>
    </interactant>
    <interactant intactId="EBI-3889">
        <id>P38822</id>
        <label>BZZ1</label>
    </interactant>
    <organismsDiffer>false</organismsDiffer>
    <experiments>4</experiments>
</comment>
<comment type="subcellular location">
    <subcellularLocation>
        <location evidence="2">Cytoplasm</location>
    </subcellularLocation>
    <subcellularLocation>
        <location evidence="2">Bud</location>
    </subcellularLocation>
    <subcellularLocation>
        <location evidence="2">Bud neck</location>
    </subcellularLocation>
</comment>
<comment type="miscellaneous">
    <text evidence="3">Present with 329 molecules/cell in log phase SD medium.</text>
</comment>
<comment type="similarity">
    <text evidence="5">Belongs to the LDB17 family.</text>
</comment>
<reference key="1">
    <citation type="journal article" date="1996" name="Yeast">
        <title>Analysis of a 23 kb region on the left arm of yeast chromosome IV.</title>
        <authorList>
            <person name="Delaveau T.T.D."/>
            <person name="Blugeon C."/>
            <person name="Jacq C."/>
            <person name="Perea J."/>
        </authorList>
    </citation>
    <scope>NUCLEOTIDE SEQUENCE [GENOMIC DNA]</scope>
</reference>
<reference key="2">
    <citation type="journal article" date="1997" name="Nature">
        <title>The nucleotide sequence of Saccharomyces cerevisiae chromosome IV.</title>
        <authorList>
            <person name="Jacq C."/>
            <person name="Alt-Moerbe J."/>
            <person name="Andre B."/>
            <person name="Arnold W."/>
            <person name="Bahr A."/>
            <person name="Ballesta J.P.G."/>
            <person name="Bargues M."/>
            <person name="Baron L."/>
            <person name="Becker A."/>
            <person name="Biteau N."/>
            <person name="Bloecker H."/>
            <person name="Blugeon C."/>
            <person name="Boskovic J."/>
            <person name="Brandt P."/>
            <person name="Brueckner M."/>
            <person name="Buitrago M.J."/>
            <person name="Coster F."/>
            <person name="Delaveau T."/>
            <person name="del Rey F."/>
            <person name="Dujon B."/>
            <person name="Eide L.G."/>
            <person name="Garcia-Cantalejo J.M."/>
            <person name="Goffeau A."/>
            <person name="Gomez-Peris A."/>
            <person name="Granotier C."/>
            <person name="Hanemann V."/>
            <person name="Hankeln T."/>
            <person name="Hoheisel J.D."/>
            <person name="Jaeger W."/>
            <person name="Jimenez A."/>
            <person name="Jonniaux J.-L."/>
            <person name="Kraemer C."/>
            <person name="Kuester H."/>
            <person name="Laamanen P."/>
            <person name="Legros Y."/>
            <person name="Louis E.J."/>
            <person name="Moeller-Rieker S."/>
            <person name="Monnet A."/>
            <person name="Moro M."/>
            <person name="Mueller-Auer S."/>
            <person name="Nussbaumer B."/>
            <person name="Paricio N."/>
            <person name="Paulin L."/>
            <person name="Perea J."/>
            <person name="Perez-Alonso M."/>
            <person name="Perez-Ortin J.E."/>
            <person name="Pohl T.M."/>
            <person name="Prydz H."/>
            <person name="Purnelle B."/>
            <person name="Rasmussen S.W."/>
            <person name="Remacha M.A."/>
            <person name="Revuelta J.L."/>
            <person name="Rieger M."/>
            <person name="Salom D."/>
            <person name="Saluz H.P."/>
            <person name="Saiz J.E."/>
            <person name="Saren A.-M."/>
            <person name="Schaefer M."/>
            <person name="Scharfe M."/>
            <person name="Schmidt E.R."/>
            <person name="Schneider C."/>
            <person name="Scholler P."/>
            <person name="Schwarz S."/>
            <person name="Soler-Mira A."/>
            <person name="Urrestarazu L.A."/>
            <person name="Verhasselt P."/>
            <person name="Vissers S."/>
            <person name="Voet M."/>
            <person name="Volckaert G."/>
            <person name="Wagner G."/>
            <person name="Wambutt R."/>
            <person name="Wedler E."/>
            <person name="Wedler H."/>
            <person name="Woelfl S."/>
            <person name="Harris D.E."/>
            <person name="Bowman S."/>
            <person name="Brown D."/>
            <person name="Churcher C.M."/>
            <person name="Connor R."/>
            <person name="Dedman K."/>
            <person name="Gentles S."/>
            <person name="Hamlin N."/>
            <person name="Hunt S."/>
            <person name="Jones L."/>
            <person name="McDonald S."/>
            <person name="Murphy L.D."/>
            <person name="Niblett D."/>
            <person name="Odell C."/>
            <person name="Oliver K."/>
            <person name="Rajandream M.A."/>
            <person name="Richards C."/>
            <person name="Shore L."/>
            <person name="Walsh S.V."/>
            <person name="Barrell B.G."/>
            <person name="Dietrich F.S."/>
            <person name="Mulligan J.T."/>
            <person name="Allen E."/>
            <person name="Araujo R."/>
            <person name="Aviles E."/>
            <person name="Berno A."/>
            <person name="Carpenter J."/>
            <person name="Chen E."/>
            <person name="Cherry J.M."/>
            <person name="Chung E."/>
            <person name="Duncan M."/>
            <person name="Hunicke-Smith S."/>
            <person name="Hyman R.W."/>
            <person name="Komp C."/>
            <person name="Lashkari D."/>
            <person name="Lew H."/>
            <person name="Lin D."/>
            <person name="Mosedale D."/>
            <person name="Nakahara K."/>
            <person name="Namath A."/>
            <person name="Oefner P."/>
            <person name="Oh C."/>
            <person name="Petel F.X."/>
            <person name="Roberts D."/>
            <person name="Schramm S."/>
            <person name="Schroeder M."/>
            <person name="Shogren T."/>
            <person name="Shroff N."/>
            <person name="Winant A."/>
            <person name="Yelton M.A."/>
            <person name="Botstein D."/>
            <person name="Davis R.W."/>
            <person name="Johnston M."/>
            <person name="Andrews S."/>
            <person name="Brinkman R."/>
            <person name="Cooper J."/>
            <person name="Ding H."/>
            <person name="Du Z."/>
            <person name="Favello A."/>
            <person name="Fulton L."/>
            <person name="Gattung S."/>
            <person name="Greco T."/>
            <person name="Hallsworth K."/>
            <person name="Hawkins J."/>
            <person name="Hillier L.W."/>
            <person name="Jier M."/>
            <person name="Johnson D."/>
            <person name="Johnston L."/>
            <person name="Kirsten J."/>
            <person name="Kucaba T."/>
            <person name="Langston Y."/>
            <person name="Latreille P."/>
            <person name="Le T."/>
            <person name="Mardis E."/>
            <person name="Menezes S."/>
            <person name="Miller N."/>
            <person name="Nhan M."/>
            <person name="Pauley A."/>
            <person name="Peluso D."/>
            <person name="Rifkin L."/>
            <person name="Riles L."/>
            <person name="Taich A."/>
            <person name="Trevaskis E."/>
            <person name="Vignati D."/>
            <person name="Wilcox L."/>
            <person name="Wohldman P."/>
            <person name="Vaudin M."/>
            <person name="Wilson R."/>
            <person name="Waterston R."/>
            <person name="Albermann K."/>
            <person name="Hani J."/>
            <person name="Heumann K."/>
            <person name="Kleine K."/>
            <person name="Mewes H.-W."/>
            <person name="Zollner A."/>
            <person name="Zaccaria P."/>
        </authorList>
    </citation>
    <scope>NUCLEOTIDE SEQUENCE [LARGE SCALE GENOMIC DNA]</scope>
    <source>
        <strain>ATCC 204508 / S288c</strain>
    </source>
</reference>
<reference key="3">
    <citation type="journal article" date="2014" name="G3 (Bethesda)">
        <title>The reference genome sequence of Saccharomyces cerevisiae: Then and now.</title>
        <authorList>
            <person name="Engel S.R."/>
            <person name="Dietrich F.S."/>
            <person name="Fisk D.G."/>
            <person name="Binkley G."/>
            <person name="Balakrishnan R."/>
            <person name="Costanzo M.C."/>
            <person name="Dwight S.S."/>
            <person name="Hitz B.C."/>
            <person name="Karra K."/>
            <person name="Nash R.S."/>
            <person name="Weng S."/>
            <person name="Wong E.D."/>
            <person name="Lloyd P."/>
            <person name="Skrzypek M.S."/>
            <person name="Miyasato S.R."/>
            <person name="Simison M."/>
            <person name="Cherry J.M."/>
        </authorList>
    </citation>
    <scope>GENOME REANNOTATION</scope>
    <source>
        <strain>ATCC 204508 / S288c</strain>
    </source>
</reference>
<reference key="4">
    <citation type="journal article" date="2007" name="Genome Res.">
        <title>Approaching a complete repository of sequence-verified protein-encoding clones for Saccharomyces cerevisiae.</title>
        <authorList>
            <person name="Hu Y."/>
            <person name="Rolfs A."/>
            <person name="Bhullar B."/>
            <person name="Murthy T.V.S."/>
            <person name="Zhu C."/>
            <person name="Berger M.F."/>
            <person name="Camargo A.A."/>
            <person name="Kelley F."/>
            <person name="McCarron S."/>
            <person name="Jepson D."/>
            <person name="Richardson A."/>
            <person name="Raphael J."/>
            <person name="Moreira D."/>
            <person name="Taycher E."/>
            <person name="Zuo D."/>
            <person name="Mohr S."/>
            <person name="Kane M.F."/>
            <person name="Williamson J."/>
            <person name="Simpson A.J.G."/>
            <person name="Bulyk M.L."/>
            <person name="Harlow E."/>
            <person name="Marsischky G."/>
            <person name="Kolodner R.D."/>
            <person name="LaBaer J."/>
        </authorList>
    </citation>
    <scope>NUCLEOTIDE SEQUENCE [GENOMIC DNA]</scope>
    <source>
        <strain>ATCC 204508 / S288c</strain>
    </source>
</reference>
<reference key="5">
    <citation type="journal article" date="2003" name="Nature">
        <title>Global analysis of protein localization in budding yeast.</title>
        <authorList>
            <person name="Huh W.-K."/>
            <person name="Falvo J.V."/>
            <person name="Gerke L.C."/>
            <person name="Carroll A.S."/>
            <person name="Howson R.W."/>
            <person name="Weissman J.S."/>
            <person name="O'Shea E.K."/>
        </authorList>
    </citation>
    <scope>SUBCELLULAR LOCATION [LARGE SCALE ANALYSIS]</scope>
</reference>
<reference key="6">
    <citation type="journal article" date="2003" name="Nature">
        <title>Global analysis of protein expression in yeast.</title>
        <authorList>
            <person name="Ghaemmaghami S."/>
            <person name="Huh W.-K."/>
            <person name="Bower K."/>
            <person name="Howson R.W."/>
            <person name="Belle A."/>
            <person name="Dephoure N."/>
            <person name="O'Shea E.K."/>
            <person name="Weissman J.S."/>
        </authorList>
    </citation>
    <scope>LEVEL OF PROTEIN EXPRESSION [LARGE SCALE ANALYSIS]</scope>
</reference>
<reference key="7">
    <citation type="journal article" date="2005" name="Fungal Genet. Biol.">
        <title>A genome-wide screen for Saccharomyces cerevisiae nonessential genes involved in mannosyl phosphate transfer to mannoprotein-linked oligosaccharides.</title>
        <authorList>
            <person name="Corbacho I."/>
            <person name="Olivero I."/>
            <person name="Hernandez L.M."/>
        </authorList>
    </citation>
    <scope>FUNCTION</scope>
</reference>
<reference key="8">
    <citation type="journal article" date="2007" name="J. Proteome Res.">
        <title>Large-scale phosphorylation analysis of alpha-factor-arrested Saccharomyces cerevisiae.</title>
        <authorList>
            <person name="Li X."/>
            <person name="Gerber S.A."/>
            <person name="Rudner A.D."/>
            <person name="Beausoleil S.A."/>
            <person name="Haas W."/>
            <person name="Villen J."/>
            <person name="Elias J.E."/>
            <person name="Gygi S.P."/>
        </authorList>
    </citation>
    <scope>PHOSPHORYLATION [LARGE SCALE ANALYSIS] AT SER-463 AND SER-466</scope>
    <scope>IDENTIFICATION BY MASS SPECTROMETRY [LARGE SCALE ANALYSIS]</scope>
    <source>
        <strain>ADR376</strain>
    </source>
</reference>
<reference key="9">
    <citation type="journal article" date="2008" name="Mol. Cell. Proteomics">
        <title>A multidimensional chromatography technology for in-depth phosphoproteome analysis.</title>
        <authorList>
            <person name="Albuquerque C.P."/>
            <person name="Smolka M.B."/>
            <person name="Payne S.H."/>
            <person name="Bafna V."/>
            <person name="Eng J."/>
            <person name="Zhou H."/>
        </authorList>
    </citation>
    <scope>PHOSPHORYLATION [LARGE SCALE ANALYSIS] AT SER-7</scope>
    <scope>IDENTIFICATION BY MASS SPECTROMETRY [LARGE SCALE ANALYSIS]</scope>
</reference>
<reference key="10">
    <citation type="journal article" date="2009" name="Science">
        <title>Global analysis of Cdk1 substrate phosphorylation sites provides insights into evolution.</title>
        <authorList>
            <person name="Holt L.J."/>
            <person name="Tuch B.B."/>
            <person name="Villen J."/>
            <person name="Johnson A.D."/>
            <person name="Gygi S.P."/>
            <person name="Morgan D.O."/>
        </authorList>
    </citation>
    <scope>PHOSPHORYLATION [LARGE SCALE ANALYSIS] AT SER-463 AND SER-466</scope>
    <scope>IDENTIFICATION BY MASS SPECTROMETRY [LARGE SCALE ANALYSIS]</scope>
</reference>
<dbReference type="EMBL" id="X97751">
    <property type="protein sequence ID" value="CAA66345.1"/>
    <property type="molecule type" value="Genomic_DNA"/>
</dbReference>
<dbReference type="EMBL" id="Z74194">
    <property type="protein sequence ID" value="CAA98720.1"/>
    <property type="molecule type" value="Genomic_DNA"/>
</dbReference>
<dbReference type="EMBL" id="AY692631">
    <property type="protein sequence ID" value="AAT92650.1"/>
    <property type="molecule type" value="Genomic_DNA"/>
</dbReference>
<dbReference type="EMBL" id="BK006938">
    <property type="protein sequence ID" value="DAA11712.1"/>
    <property type="molecule type" value="Genomic_DNA"/>
</dbReference>
<dbReference type="PIR" id="S67694">
    <property type="entry name" value="S67694"/>
</dbReference>
<dbReference type="RefSeq" id="NP_010135.1">
    <property type="nucleotide sequence ID" value="NM_001180206.1"/>
</dbReference>
<dbReference type="BioGRID" id="31915">
    <property type="interactions" value="83"/>
</dbReference>
<dbReference type="DIP" id="DIP-1803N"/>
<dbReference type="FunCoup" id="Q12342">
    <property type="interactions" value="27"/>
</dbReference>
<dbReference type="IntAct" id="Q12342">
    <property type="interactions" value="5"/>
</dbReference>
<dbReference type="MINT" id="Q12342"/>
<dbReference type="STRING" id="4932.YDL146W"/>
<dbReference type="iPTMnet" id="Q12342"/>
<dbReference type="PaxDb" id="4932-YDL146W"/>
<dbReference type="PeptideAtlas" id="Q12342"/>
<dbReference type="PRIDE" id="Q12342"/>
<dbReference type="EnsemblFungi" id="YDL146W_mRNA">
    <property type="protein sequence ID" value="YDL146W"/>
    <property type="gene ID" value="YDL146W"/>
</dbReference>
<dbReference type="GeneID" id="851409"/>
<dbReference type="KEGG" id="sce:YDL146W"/>
<dbReference type="AGR" id="SGD:S000002305"/>
<dbReference type="SGD" id="S000002305">
    <property type="gene designation" value="LDB17"/>
</dbReference>
<dbReference type="VEuPathDB" id="FungiDB:YDL146W"/>
<dbReference type="eggNOG" id="KOG4035">
    <property type="taxonomic scope" value="Eukaryota"/>
</dbReference>
<dbReference type="GeneTree" id="ENSGT00390000015725"/>
<dbReference type="HOGENOM" id="CLU_017272_2_1_1"/>
<dbReference type="InParanoid" id="Q12342"/>
<dbReference type="OMA" id="ISLRHTY"/>
<dbReference type="OrthoDB" id="445362at2759"/>
<dbReference type="BioCyc" id="YEAST:G3O-29543-MONOMER"/>
<dbReference type="BioGRID-ORCS" id="851409">
    <property type="hits" value="0 hits in 10 CRISPR screens"/>
</dbReference>
<dbReference type="PRO" id="PR:Q12342"/>
<dbReference type="Proteomes" id="UP000002311">
    <property type="component" value="Chromosome IV"/>
</dbReference>
<dbReference type="RNAct" id="Q12342">
    <property type="molecule type" value="protein"/>
</dbReference>
<dbReference type="GO" id="GO:0030479">
    <property type="term" value="C:actin cortical patch"/>
    <property type="evidence" value="ECO:0000314"/>
    <property type="project" value="SGD"/>
</dbReference>
<dbReference type="GO" id="GO:0005933">
    <property type="term" value="C:cellular bud"/>
    <property type="evidence" value="ECO:0007005"/>
    <property type="project" value="SGD"/>
</dbReference>
<dbReference type="GO" id="GO:0005935">
    <property type="term" value="C:cellular bud neck"/>
    <property type="evidence" value="ECO:0007005"/>
    <property type="project" value="SGD"/>
</dbReference>
<dbReference type="GO" id="GO:0005737">
    <property type="term" value="C:cytoplasm"/>
    <property type="evidence" value="ECO:0007005"/>
    <property type="project" value="SGD"/>
</dbReference>
<dbReference type="GO" id="GO:0071933">
    <property type="term" value="F:Arp2/3 complex binding"/>
    <property type="evidence" value="ECO:0000318"/>
    <property type="project" value="GO_Central"/>
</dbReference>
<dbReference type="GO" id="GO:0000147">
    <property type="term" value="P:actin cortical patch assembly"/>
    <property type="evidence" value="ECO:0000318"/>
    <property type="project" value="GO_Central"/>
</dbReference>
<dbReference type="GO" id="GO:0051666">
    <property type="term" value="P:actin cortical patch localization"/>
    <property type="evidence" value="ECO:0000318"/>
    <property type="project" value="GO_Central"/>
</dbReference>
<dbReference type="GO" id="GO:0006897">
    <property type="term" value="P:endocytosis"/>
    <property type="evidence" value="ECO:0000315"/>
    <property type="project" value="SGD"/>
</dbReference>
<dbReference type="InterPro" id="IPR030125">
    <property type="entry name" value="SPIN90/Ldb17"/>
</dbReference>
<dbReference type="InterPro" id="IPR018556">
    <property type="entry name" value="SPIN90/Ldb17_LRD"/>
</dbReference>
<dbReference type="PANTHER" id="PTHR13357:SF1">
    <property type="entry name" value="NCK-INTERACTING PROTEIN WITH SH3 DOMAIN"/>
    <property type="match status" value="1"/>
</dbReference>
<dbReference type="PANTHER" id="PTHR13357">
    <property type="entry name" value="SH3 ADAPTER PROTEIN SPIN90 NCK INTERACTING PROTEIN WITH SH3 DOMAIN"/>
    <property type="match status" value="1"/>
</dbReference>
<dbReference type="Pfam" id="PF09431">
    <property type="entry name" value="SPIN90_LRD"/>
    <property type="match status" value="1"/>
</dbReference>
<keyword id="KW-0963">Cytoplasm</keyword>
<keyword id="KW-0597">Phosphoprotein</keyword>
<keyword id="KW-1185">Reference proteome</keyword>
<accession>Q12342</accession>
<accession>D6VRK2</accession>